<comment type="function">
    <text evidence="1">Necessary for normal cell division and for the maintenance of normal septation.</text>
</comment>
<comment type="cofactor">
    <cofactor evidence="1">
        <name>Mg(2+)</name>
        <dbReference type="ChEBI" id="CHEBI:18420"/>
    </cofactor>
</comment>
<comment type="similarity">
    <text evidence="1">Belongs to the TRAFAC class TrmE-Era-EngA-EngB-Septin-like GTPase superfamily. EngB GTPase family.</text>
</comment>
<name>ENGB_LACP7</name>
<gene>
    <name evidence="1" type="primary">engB</name>
    <name type="ordered locus">Cphy_0380</name>
</gene>
<reference key="1">
    <citation type="submission" date="2007-11" db="EMBL/GenBank/DDBJ databases">
        <title>Complete genome sequence of Clostridium phytofermentans ISDg.</title>
        <authorList>
            <person name="Leschine S.B."/>
            <person name="Warnick T.A."/>
            <person name="Blanchard J.L."/>
            <person name="Schnell D.J."/>
            <person name="Petit E.L."/>
            <person name="LaTouf W.G."/>
            <person name="Copeland A."/>
            <person name="Lucas S."/>
            <person name="Lapidus A."/>
            <person name="Barry K."/>
            <person name="Glavina del Rio T."/>
            <person name="Dalin E."/>
            <person name="Tice H."/>
            <person name="Pitluck S."/>
            <person name="Kiss H."/>
            <person name="Brettin T."/>
            <person name="Bruce D."/>
            <person name="Detter J.C."/>
            <person name="Han C."/>
            <person name="Kuske C."/>
            <person name="Schmutz J."/>
            <person name="Larimer F."/>
            <person name="Land M."/>
            <person name="Hauser L."/>
            <person name="Kyrpides N."/>
            <person name="Kim E.A."/>
            <person name="Richardson P."/>
        </authorList>
    </citation>
    <scope>NUCLEOTIDE SEQUENCE [LARGE SCALE GENOMIC DNA]</scope>
    <source>
        <strain>ATCC 700394 / DSM 18823 / ISDg</strain>
    </source>
</reference>
<dbReference type="EMBL" id="CP000885">
    <property type="protein sequence ID" value="ABX40767.1"/>
    <property type="molecule type" value="Genomic_DNA"/>
</dbReference>
<dbReference type="RefSeq" id="WP_012198410.1">
    <property type="nucleotide sequence ID" value="NC_010001.1"/>
</dbReference>
<dbReference type="SMR" id="A9KHA0"/>
<dbReference type="STRING" id="357809.Cphy_0380"/>
<dbReference type="KEGG" id="cpy:Cphy_0380"/>
<dbReference type="eggNOG" id="COG0218">
    <property type="taxonomic scope" value="Bacteria"/>
</dbReference>
<dbReference type="HOGENOM" id="CLU_033732_3_0_9"/>
<dbReference type="OrthoDB" id="9804921at2"/>
<dbReference type="Proteomes" id="UP000000370">
    <property type="component" value="Chromosome"/>
</dbReference>
<dbReference type="GO" id="GO:0005829">
    <property type="term" value="C:cytosol"/>
    <property type="evidence" value="ECO:0007669"/>
    <property type="project" value="TreeGrafter"/>
</dbReference>
<dbReference type="GO" id="GO:0005525">
    <property type="term" value="F:GTP binding"/>
    <property type="evidence" value="ECO:0007669"/>
    <property type="project" value="UniProtKB-UniRule"/>
</dbReference>
<dbReference type="GO" id="GO:0046872">
    <property type="term" value="F:metal ion binding"/>
    <property type="evidence" value="ECO:0007669"/>
    <property type="project" value="UniProtKB-KW"/>
</dbReference>
<dbReference type="GO" id="GO:0000917">
    <property type="term" value="P:division septum assembly"/>
    <property type="evidence" value="ECO:0007669"/>
    <property type="project" value="UniProtKB-KW"/>
</dbReference>
<dbReference type="CDD" id="cd01876">
    <property type="entry name" value="YihA_EngB"/>
    <property type="match status" value="1"/>
</dbReference>
<dbReference type="FunFam" id="3.40.50.300:FF:000098">
    <property type="entry name" value="Probable GTP-binding protein EngB"/>
    <property type="match status" value="1"/>
</dbReference>
<dbReference type="Gene3D" id="3.40.50.300">
    <property type="entry name" value="P-loop containing nucleotide triphosphate hydrolases"/>
    <property type="match status" value="1"/>
</dbReference>
<dbReference type="HAMAP" id="MF_00321">
    <property type="entry name" value="GTPase_EngB"/>
    <property type="match status" value="1"/>
</dbReference>
<dbReference type="InterPro" id="IPR030393">
    <property type="entry name" value="G_ENGB_dom"/>
</dbReference>
<dbReference type="InterPro" id="IPR006073">
    <property type="entry name" value="GTP-bd"/>
</dbReference>
<dbReference type="InterPro" id="IPR019987">
    <property type="entry name" value="GTP-bd_ribosome_bio_YsxC"/>
</dbReference>
<dbReference type="InterPro" id="IPR027417">
    <property type="entry name" value="P-loop_NTPase"/>
</dbReference>
<dbReference type="NCBIfam" id="TIGR03598">
    <property type="entry name" value="GTPase_YsxC"/>
    <property type="match status" value="1"/>
</dbReference>
<dbReference type="PANTHER" id="PTHR11649:SF13">
    <property type="entry name" value="ENGB-TYPE G DOMAIN-CONTAINING PROTEIN"/>
    <property type="match status" value="1"/>
</dbReference>
<dbReference type="PANTHER" id="PTHR11649">
    <property type="entry name" value="MSS1/TRME-RELATED GTP-BINDING PROTEIN"/>
    <property type="match status" value="1"/>
</dbReference>
<dbReference type="Pfam" id="PF01926">
    <property type="entry name" value="MMR_HSR1"/>
    <property type="match status" value="1"/>
</dbReference>
<dbReference type="SUPFAM" id="SSF52540">
    <property type="entry name" value="P-loop containing nucleoside triphosphate hydrolases"/>
    <property type="match status" value="1"/>
</dbReference>
<dbReference type="PROSITE" id="PS51706">
    <property type="entry name" value="G_ENGB"/>
    <property type="match status" value="1"/>
</dbReference>
<protein>
    <recommendedName>
        <fullName evidence="1">Probable GTP-binding protein EngB</fullName>
    </recommendedName>
</protein>
<accession>A9KHA0</accession>
<proteinExistence type="inferred from homology"/>
<organism>
    <name type="scientific">Lachnoclostridium phytofermentans (strain ATCC 700394 / DSM 18823 / ISDg)</name>
    <name type="common">Clostridium phytofermentans</name>
    <dbReference type="NCBI Taxonomy" id="357809"/>
    <lineage>
        <taxon>Bacteria</taxon>
        <taxon>Bacillati</taxon>
        <taxon>Bacillota</taxon>
        <taxon>Clostridia</taxon>
        <taxon>Lachnospirales</taxon>
        <taxon>Lachnospiraceae</taxon>
    </lineage>
</organism>
<feature type="chain" id="PRO_1000079167" description="Probable GTP-binding protein EngB">
    <location>
        <begin position="1"/>
        <end position="201"/>
    </location>
</feature>
<feature type="domain" description="EngB-type G" evidence="1">
    <location>
        <begin position="22"/>
        <end position="195"/>
    </location>
</feature>
<feature type="binding site" evidence="1">
    <location>
        <begin position="30"/>
        <end position="37"/>
    </location>
    <ligand>
        <name>GTP</name>
        <dbReference type="ChEBI" id="CHEBI:37565"/>
    </ligand>
</feature>
<feature type="binding site" evidence="1">
    <location>
        <position position="37"/>
    </location>
    <ligand>
        <name>Mg(2+)</name>
        <dbReference type="ChEBI" id="CHEBI:18420"/>
    </ligand>
</feature>
<feature type="binding site" evidence="1">
    <location>
        <begin position="57"/>
        <end position="61"/>
    </location>
    <ligand>
        <name>GTP</name>
        <dbReference type="ChEBI" id="CHEBI:37565"/>
    </ligand>
</feature>
<feature type="binding site" evidence="1">
    <location>
        <position position="59"/>
    </location>
    <ligand>
        <name>Mg(2+)</name>
        <dbReference type="ChEBI" id="CHEBI:18420"/>
    </ligand>
</feature>
<feature type="binding site" evidence="1">
    <location>
        <begin position="75"/>
        <end position="78"/>
    </location>
    <ligand>
        <name>GTP</name>
        <dbReference type="ChEBI" id="CHEBI:37565"/>
    </ligand>
</feature>
<feature type="binding site" evidence="1">
    <location>
        <begin position="142"/>
        <end position="145"/>
    </location>
    <ligand>
        <name>GTP</name>
        <dbReference type="ChEBI" id="CHEBI:37565"/>
    </ligand>
</feature>
<feature type="binding site" evidence="1">
    <location>
        <begin position="174"/>
        <end position="176"/>
    </location>
    <ligand>
        <name>GTP</name>
        <dbReference type="ChEBI" id="CHEBI:37565"/>
    </ligand>
</feature>
<sequence length="201" mass="22834">MNVNQVDLETVCGVTSVLPENTQPEFAFAGKSNVGKSSLINGLMNRKSFARTSSQPGKTQTINFYHLNEKLYFVDLPGYGYAKVSSELKAKWGKMIEKYLRTSTQLKVIFLLIDIRHEPSANDKDMYEWIVHNGFEPVIIATKLDKINRSQRDKHIKMVRTGLCAGANTKILPFSSLSKEGKDDIWRCIEQFLEVPDTENK</sequence>
<keyword id="KW-0131">Cell cycle</keyword>
<keyword id="KW-0132">Cell division</keyword>
<keyword id="KW-0342">GTP-binding</keyword>
<keyword id="KW-0460">Magnesium</keyword>
<keyword id="KW-0479">Metal-binding</keyword>
<keyword id="KW-0547">Nucleotide-binding</keyword>
<keyword id="KW-1185">Reference proteome</keyword>
<keyword id="KW-0717">Septation</keyword>
<evidence type="ECO:0000255" key="1">
    <source>
        <dbReference type="HAMAP-Rule" id="MF_00321"/>
    </source>
</evidence>